<reference key="1">
    <citation type="submission" date="2007-11" db="EMBL/GenBank/DDBJ databases">
        <title>Genome sequencing of phylogenetically and phenotypically diverse Coxiella burnetii isolates.</title>
        <authorList>
            <person name="Seshadri R."/>
            <person name="Samuel J.E."/>
        </authorList>
    </citation>
    <scope>NUCLEOTIDE SEQUENCE [LARGE SCALE GENOMIC DNA]</scope>
    <source>
        <strain>RSA 331 / Henzerling II</strain>
    </source>
</reference>
<gene>
    <name evidence="1" type="primary">rplN</name>
    <name type="ordered locus">COXBURSA331_A0347</name>
</gene>
<proteinExistence type="inferred from homology"/>
<organism>
    <name type="scientific">Coxiella burnetii (strain RSA 331 / Henzerling II)</name>
    <dbReference type="NCBI Taxonomy" id="360115"/>
    <lineage>
        <taxon>Bacteria</taxon>
        <taxon>Pseudomonadati</taxon>
        <taxon>Pseudomonadota</taxon>
        <taxon>Gammaproteobacteria</taxon>
        <taxon>Legionellales</taxon>
        <taxon>Coxiellaceae</taxon>
        <taxon>Coxiella</taxon>
    </lineage>
</organism>
<sequence>MIQTQSIVDVADNSGARRVMCIKVLGGSKRRYANIGDVIKVSIKEAIPRGKVKKGDVMHAVVVRTRKGVRRNDGSLIRFDNNAVVLLNNQLQLVGTRVFGPVVRELRTDKFMKIISLALEVL</sequence>
<keyword id="KW-0687">Ribonucleoprotein</keyword>
<keyword id="KW-0689">Ribosomal protein</keyword>
<keyword id="KW-0694">RNA-binding</keyword>
<keyword id="KW-0699">rRNA-binding</keyword>
<feature type="chain" id="PRO_1000087124" description="Large ribosomal subunit protein uL14">
    <location>
        <begin position="1"/>
        <end position="122"/>
    </location>
</feature>
<accession>A9NAY0</accession>
<name>RL14_COXBR</name>
<protein>
    <recommendedName>
        <fullName evidence="1">Large ribosomal subunit protein uL14</fullName>
    </recommendedName>
    <alternativeName>
        <fullName evidence="2">50S ribosomal protein L14</fullName>
    </alternativeName>
</protein>
<dbReference type="EMBL" id="CP000890">
    <property type="protein sequence ID" value="ABX78381.1"/>
    <property type="molecule type" value="Genomic_DNA"/>
</dbReference>
<dbReference type="RefSeq" id="WP_005771526.1">
    <property type="nucleotide sequence ID" value="NC_010117.1"/>
</dbReference>
<dbReference type="SMR" id="A9NAY0"/>
<dbReference type="KEGG" id="cbs:COXBURSA331_A0347"/>
<dbReference type="HOGENOM" id="CLU_095071_2_1_6"/>
<dbReference type="GO" id="GO:0022625">
    <property type="term" value="C:cytosolic large ribosomal subunit"/>
    <property type="evidence" value="ECO:0007669"/>
    <property type="project" value="TreeGrafter"/>
</dbReference>
<dbReference type="GO" id="GO:0070180">
    <property type="term" value="F:large ribosomal subunit rRNA binding"/>
    <property type="evidence" value="ECO:0007669"/>
    <property type="project" value="TreeGrafter"/>
</dbReference>
<dbReference type="GO" id="GO:0003735">
    <property type="term" value="F:structural constituent of ribosome"/>
    <property type="evidence" value="ECO:0007669"/>
    <property type="project" value="InterPro"/>
</dbReference>
<dbReference type="GO" id="GO:0006412">
    <property type="term" value="P:translation"/>
    <property type="evidence" value="ECO:0007669"/>
    <property type="project" value="UniProtKB-UniRule"/>
</dbReference>
<dbReference type="CDD" id="cd00337">
    <property type="entry name" value="Ribosomal_uL14"/>
    <property type="match status" value="1"/>
</dbReference>
<dbReference type="FunFam" id="2.40.150.20:FF:000001">
    <property type="entry name" value="50S ribosomal protein L14"/>
    <property type="match status" value="1"/>
</dbReference>
<dbReference type="Gene3D" id="2.40.150.20">
    <property type="entry name" value="Ribosomal protein L14"/>
    <property type="match status" value="1"/>
</dbReference>
<dbReference type="HAMAP" id="MF_01367">
    <property type="entry name" value="Ribosomal_uL14"/>
    <property type="match status" value="1"/>
</dbReference>
<dbReference type="InterPro" id="IPR000218">
    <property type="entry name" value="Ribosomal_uL14"/>
</dbReference>
<dbReference type="InterPro" id="IPR005745">
    <property type="entry name" value="Ribosomal_uL14_bac-type"/>
</dbReference>
<dbReference type="InterPro" id="IPR019972">
    <property type="entry name" value="Ribosomal_uL14_CS"/>
</dbReference>
<dbReference type="InterPro" id="IPR036853">
    <property type="entry name" value="Ribosomal_uL14_sf"/>
</dbReference>
<dbReference type="NCBIfam" id="TIGR01067">
    <property type="entry name" value="rplN_bact"/>
    <property type="match status" value="1"/>
</dbReference>
<dbReference type="PANTHER" id="PTHR11761">
    <property type="entry name" value="50S/60S RIBOSOMAL PROTEIN L14/L23"/>
    <property type="match status" value="1"/>
</dbReference>
<dbReference type="PANTHER" id="PTHR11761:SF3">
    <property type="entry name" value="LARGE RIBOSOMAL SUBUNIT PROTEIN UL14M"/>
    <property type="match status" value="1"/>
</dbReference>
<dbReference type="Pfam" id="PF00238">
    <property type="entry name" value="Ribosomal_L14"/>
    <property type="match status" value="1"/>
</dbReference>
<dbReference type="SMART" id="SM01374">
    <property type="entry name" value="Ribosomal_L14"/>
    <property type="match status" value="1"/>
</dbReference>
<dbReference type="SUPFAM" id="SSF50193">
    <property type="entry name" value="Ribosomal protein L14"/>
    <property type="match status" value="1"/>
</dbReference>
<dbReference type="PROSITE" id="PS00049">
    <property type="entry name" value="RIBOSOMAL_L14"/>
    <property type="match status" value="1"/>
</dbReference>
<evidence type="ECO:0000255" key="1">
    <source>
        <dbReference type="HAMAP-Rule" id="MF_01367"/>
    </source>
</evidence>
<evidence type="ECO:0000305" key="2"/>
<comment type="function">
    <text evidence="1">Binds to 23S rRNA. Forms part of two intersubunit bridges in the 70S ribosome.</text>
</comment>
<comment type="subunit">
    <text evidence="1">Part of the 50S ribosomal subunit. Forms a cluster with proteins L3 and L19. In the 70S ribosome, L14 and L19 interact and together make contacts with the 16S rRNA in bridges B5 and B8.</text>
</comment>
<comment type="similarity">
    <text evidence="1">Belongs to the universal ribosomal protein uL14 family.</text>
</comment>